<organism>
    <name type="scientific">Human respiratory syncytial virus B (strain 8/60)</name>
    <dbReference type="NCBI Taxonomy" id="11258"/>
    <lineage>
        <taxon>Viruses</taxon>
        <taxon>Riboviria</taxon>
        <taxon>Orthornavirae</taxon>
        <taxon>Negarnaviricota</taxon>
        <taxon>Haploviricotina</taxon>
        <taxon>Monjiviricetes</taxon>
        <taxon>Mononegavirales</taxon>
        <taxon>Pneumoviridae</taxon>
        <taxon>Orthopneumovirus</taxon>
        <taxon>Orthopneumovirus hominis</taxon>
    </lineage>
</organism>
<gene>
    <name evidence="1" type="primary">SH</name>
    <name evidence="1" type="synonym">1A</name>
</gene>
<accession>P69360</accession>
<accession>P24570</accession>
<sequence length="65" mass="7535">MGNTSITIEFTSKFWPYFTLIHMILTPISLLIIITIMIAILNKLSEHKTFCNKTLELGQMYQINT</sequence>
<feature type="chain" id="PRO_0000142868" description="Small hydrophobic protein">
    <location>
        <begin position="1"/>
        <end position="65"/>
    </location>
</feature>
<feature type="topological domain" description="Intravirion" evidence="1">
    <location>
        <begin position="1"/>
        <end position="20"/>
    </location>
</feature>
<feature type="transmembrane region" description="Helical; Signal-anchor for type II membrane protein" evidence="1">
    <location>
        <begin position="21"/>
        <end position="44"/>
    </location>
</feature>
<feature type="topological domain" description="Virion surface" evidence="1">
    <location>
        <begin position="45"/>
        <end position="65"/>
    </location>
</feature>
<feature type="region of interest" description="Interaction with host BCAP31" evidence="1">
    <location>
        <begin position="6"/>
        <end position="15"/>
    </location>
</feature>
<feature type="region of interest" description="Interaction with small-molecule inhibitor" evidence="1">
    <location>
        <begin position="38"/>
        <end position="43"/>
    </location>
</feature>
<feature type="site" description="Involved in opening and closing mechanism of the pentameric structure" evidence="1">
    <location>
        <position position="22"/>
    </location>
</feature>
<feature type="glycosylation site" description="N-linked (GlcNAc...) asparagine; by host" evidence="2">
    <location>
        <position position="52"/>
    </location>
</feature>
<proteinExistence type="inferred from homology"/>
<reference key="1">
    <citation type="journal article" date="1992" name="Virology">
        <title>Polylactosaminoglycan modification of the respiratory syncytial virus small hydrophobic (SH) protein: a conserved feature among human and bovine respiratory syncytial viruses.</title>
        <authorList>
            <person name="Anderson K."/>
            <person name="King A.M.Q."/>
            <person name="Lerch R.A."/>
            <person name="Wertz G.W."/>
        </authorList>
    </citation>
    <scope>NUCLEOTIDE SEQUENCE [MRNA]</scope>
</reference>
<evidence type="ECO:0000250" key="1">
    <source>
        <dbReference type="UniProtKB" id="P0DOE5"/>
    </source>
</evidence>
<evidence type="ECO:0000255" key="2"/>
<evidence type="ECO:0000305" key="3"/>
<organismHost>
    <name type="scientific">Homo sapiens</name>
    <name type="common">Human</name>
    <dbReference type="NCBI Taxonomy" id="9606"/>
</organismHost>
<dbReference type="EMBL" id="M86651">
    <property type="protein sequence ID" value="AAA47414.1"/>
    <property type="molecule type" value="mRNA"/>
</dbReference>
<dbReference type="PIR" id="B44049">
    <property type="entry name" value="P1NZB3"/>
</dbReference>
<dbReference type="SMR" id="P69360"/>
<dbReference type="GlyCosmos" id="P69360">
    <property type="glycosylation" value="1 site, No reported glycans"/>
</dbReference>
<dbReference type="GO" id="GO:0044167">
    <property type="term" value="C:host cell endoplasmic reticulum membrane"/>
    <property type="evidence" value="ECO:0007669"/>
    <property type="project" value="UniProtKB-SubCell"/>
</dbReference>
<dbReference type="GO" id="GO:0044178">
    <property type="term" value="C:host cell Golgi membrane"/>
    <property type="evidence" value="ECO:0007669"/>
    <property type="project" value="UniProtKB-SubCell"/>
</dbReference>
<dbReference type="GO" id="GO:0020002">
    <property type="term" value="C:host cell plasma membrane"/>
    <property type="evidence" value="ECO:0007669"/>
    <property type="project" value="UniProtKB-SubCell"/>
</dbReference>
<dbReference type="GO" id="GO:0016020">
    <property type="term" value="C:membrane"/>
    <property type="evidence" value="ECO:0007669"/>
    <property type="project" value="UniProtKB-KW"/>
</dbReference>
<dbReference type="GO" id="GO:0055036">
    <property type="term" value="C:virion membrane"/>
    <property type="evidence" value="ECO:0007669"/>
    <property type="project" value="UniProtKB-SubCell"/>
</dbReference>
<dbReference type="GO" id="GO:0015267">
    <property type="term" value="F:channel activity"/>
    <property type="evidence" value="ECO:0007669"/>
    <property type="project" value="UniProtKB-KW"/>
</dbReference>
<dbReference type="GO" id="GO:0034220">
    <property type="term" value="P:monoatomic ion transmembrane transport"/>
    <property type="evidence" value="ECO:0007669"/>
    <property type="project" value="UniProtKB-KW"/>
</dbReference>
<dbReference type="GO" id="GO:0052151">
    <property type="term" value="P:symbiont-mediated activation of host apoptosis"/>
    <property type="evidence" value="ECO:0007669"/>
    <property type="project" value="UniProtKB-KW"/>
</dbReference>
<dbReference type="InterPro" id="IPR005327">
    <property type="entry name" value="SHP"/>
</dbReference>
<dbReference type="Pfam" id="PF03579">
    <property type="entry name" value="SHP"/>
    <property type="match status" value="1"/>
</dbReference>
<comment type="function">
    <text evidence="1">Viroporin that forms a homopentameric ion channel displaying low ion selectivity. May play a role in virus morphogenesis and pathogenicity at various stages of the viral life cycle. Accumulates at the membrane of the Golgi apparatus in infected cells and may facilitate virus release by modifying the secretory pathway. May enhance host membrane permeability and disrupt cellular ion homeostasis, which can be sensed as damage-associated molecular patterns/danger signals, triggering NLRP3 inflammasome activation and inflammatory immune response. Also inhibits host TNFA-mediated signaling pathway and may delay apoptosis, allowing time for the virus to replicate.</text>
</comment>
<comment type="activity regulation">
    <text evidence="1">Channel activity is inhibited by copper. Also inhibited by small-molecule pyronin B.</text>
</comment>
<comment type="subunit">
    <text evidence="1">Homopentamer forming a funnel-like pore. Interacts with glycoprotein G; this interaction occurs on the surface of virion particles and infected cells. Interacts with host BCAP31 (via C-terminus); this interaction is direct.</text>
</comment>
<comment type="subcellular location">
    <subcellularLocation>
        <location evidence="1">Virion membrane</location>
        <topology evidence="1">Single-pass type II membrane protein</topology>
    </subcellularLocation>
    <subcellularLocation>
        <location evidence="1">Host cell membrane</location>
        <topology evidence="1">Single-pass type II membrane protein</topology>
    </subcellularLocation>
    <subcellularLocation>
        <location evidence="1">Host Golgi apparatus membrane</location>
        <topology evidence="1">Single-pass type II membrane protein</topology>
    </subcellularLocation>
    <subcellularLocation>
        <location evidence="1">Host endoplasmic reticulum membrane</location>
        <topology evidence="1">Single-pass type II membrane protein</topology>
    </subcellularLocation>
    <text evidence="1">Present in very small amount in the virion. Detected in lipid rafts of host Golgi apparatus membrane.</text>
</comment>
<comment type="PTM">
    <text evidence="1">Four species of SH have been detected in infected cell cytoplasm: a 7.5 kDa non-glycosylated form (SH0), a 13-15 kDa form that contains one or two N-linked carbohydrate side chains of the high-mannose type (SHg), a 21-30 kDa polylactosaminoglycan-modified form of the protein (SHp), and the isoform generated by alternative translational initiation. Of these different forms, SH0 is by far the most abundant protein detected during virus infection.</text>
</comment>
<comment type="PTM">
    <text evidence="1">Tyrosine phosphorylated.</text>
</comment>
<comment type="similarity">
    <text evidence="3">Belongs to the orthopneumovirus small hydrophobic protein family.</text>
</comment>
<keyword id="KW-1073">Activation of host caspases by virus</keyword>
<keyword id="KW-0325">Glycoprotein</keyword>
<keyword id="KW-1032">Host cell membrane</keyword>
<keyword id="KW-1038">Host endoplasmic reticulum</keyword>
<keyword id="KW-1040">Host Golgi apparatus</keyword>
<keyword id="KW-1043">Host membrane</keyword>
<keyword id="KW-0945">Host-virus interaction</keyword>
<keyword id="KW-0407">Ion channel</keyword>
<keyword id="KW-0406">Ion transport</keyword>
<keyword id="KW-0472">Membrane</keyword>
<keyword id="KW-1119">Modulation of host cell apoptosis by virus</keyword>
<keyword id="KW-0597">Phosphoprotein</keyword>
<keyword id="KW-0735">Signal-anchor</keyword>
<keyword id="KW-0812">Transmembrane</keyword>
<keyword id="KW-1133">Transmembrane helix</keyword>
<keyword id="KW-0813">Transport</keyword>
<keyword id="KW-1182">Viral ion channel</keyword>
<keyword id="KW-0946">Virion</keyword>
<protein>
    <recommendedName>
        <fullName evidence="1">Small hydrophobic protein</fullName>
    </recommendedName>
    <alternativeName>
        <fullName>Small protein 1A</fullName>
    </alternativeName>
</protein>
<name>SH_HRSV8</name>